<name>RIM1_YEAST</name>
<gene>
    <name type="primary">RIM1</name>
    <name type="ordered locus">YCR028C-A</name>
    <name type="ORF">YCR28C-A</name>
</gene>
<protein>
    <recommendedName>
        <fullName>Single-stranded DNA-binding protein RIM1, mitochondrial</fullName>
    </recommendedName>
    <alternativeName>
        <fullName>Mitochondrial ssDNA-binding protein</fullName>
    </alternativeName>
</protein>
<dbReference type="EMBL" id="S43128">
    <property type="protein sequence ID" value="AAB22978.1"/>
    <property type="molecule type" value="Genomic_DNA"/>
</dbReference>
<dbReference type="EMBL" id="S43129">
    <property type="protein sequence ID" value="AAD13828.1"/>
    <property type="molecule type" value="mRNA"/>
</dbReference>
<dbReference type="EMBL" id="X59720">
    <property type="protein sequence ID" value="CAA42321.2"/>
    <property type="molecule type" value="Genomic_DNA"/>
</dbReference>
<dbReference type="EMBL" id="BK006937">
    <property type="protein sequence ID" value="DAA07508.1"/>
    <property type="molecule type" value="Genomic_DNA"/>
</dbReference>
<dbReference type="PIR" id="S23548">
    <property type="entry name" value="S23548"/>
</dbReference>
<dbReference type="RefSeq" id="NP_009958.2">
    <property type="nucleotide sequence ID" value="NM_001184315.1"/>
</dbReference>
<dbReference type="PDB" id="6CQK">
    <property type="method" value="X-ray"/>
    <property type="resolution" value="2.80 A"/>
    <property type="chains" value="A/B/C/D=17-135"/>
</dbReference>
<dbReference type="PDB" id="6CQM">
    <property type="method" value="X-ray"/>
    <property type="resolution" value="3.00 A"/>
    <property type="chains" value="A/B/C/D/E/F/G/H=17-135"/>
</dbReference>
<dbReference type="PDB" id="6CQO">
    <property type="method" value="X-ray"/>
    <property type="resolution" value="2.80 A"/>
    <property type="chains" value="A/B/C/D/E/F/G/H=17-135"/>
</dbReference>
<dbReference type="PDBsum" id="6CQK"/>
<dbReference type="PDBsum" id="6CQM"/>
<dbReference type="PDBsum" id="6CQO"/>
<dbReference type="SMR" id="P32445"/>
<dbReference type="BioGRID" id="31012">
    <property type="interactions" value="451"/>
</dbReference>
<dbReference type="DIP" id="DIP-7376N"/>
<dbReference type="FunCoup" id="P32445">
    <property type="interactions" value="264"/>
</dbReference>
<dbReference type="IntAct" id="P32445">
    <property type="interactions" value="66"/>
</dbReference>
<dbReference type="MINT" id="P32445"/>
<dbReference type="STRING" id="4932.YCR028C-A"/>
<dbReference type="iPTMnet" id="P32445"/>
<dbReference type="PaxDb" id="4932-YCR028C-A"/>
<dbReference type="PeptideAtlas" id="P32445"/>
<dbReference type="TopDownProteomics" id="P32445"/>
<dbReference type="EnsemblFungi" id="YCR028C-A_mRNA">
    <property type="protein sequence ID" value="YCR028C-A"/>
    <property type="gene ID" value="YCR028C-A"/>
</dbReference>
<dbReference type="GeneID" id="850395"/>
<dbReference type="KEGG" id="sce:YCR028C-A"/>
<dbReference type="AGR" id="SGD:S000007222"/>
<dbReference type="SGD" id="S000007222">
    <property type="gene designation" value="RIM1"/>
</dbReference>
<dbReference type="VEuPathDB" id="FungiDB:YCR028C-A"/>
<dbReference type="eggNOG" id="ENOG502S0M8">
    <property type="taxonomic scope" value="Eukaryota"/>
</dbReference>
<dbReference type="HOGENOM" id="CLU_126647_1_1_1"/>
<dbReference type="InParanoid" id="P32445"/>
<dbReference type="OMA" id="TQYVRKG"/>
<dbReference type="OrthoDB" id="1078367at2759"/>
<dbReference type="BioCyc" id="YEAST:G3O-29415-MONOMER"/>
<dbReference type="Reactome" id="R-SCE-9837999">
    <property type="pathway name" value="Mitochondrial protein degradation"/>
</dbReference>
<dbReference type="BioGRID-ORCS" id="850395">
    <property type="hits" value="9 hits in 10 CRISPR screens"/>
</dbReference>
<dbReference type="PRO" id="PR:P32445"/>
<dbReference type="Proteomes" id="UP000002311">
    <property type="component" value="Chromosome III"/>
</dbReference>
<dbReference type="RNAct" id="P32445">
    <property type="molecule type" value="protein"/>
</dbReference>
<dbReference type="GO" id="GO:0042645">
    <property type="term" value="C:mitochondrial nucleoid"/>
    <property type="evidence" value="ECO:0000314"/>
    <property type="project" value="SGD"/>
</dbReference>
<dbReference type="GO" id="GO:0005739">
    <property type="term" value="C:mitochondrion"/>
    <property type="evidence" value="ECO:0000314"/>
    <property type="project" value="SGD"/>
</dbReference>
<dbReference type="GO" id="GO:0008047">
    <property type="term" value="F:enzyme activator activity"/>
    <property type="evidence" value="ECO:0000318"/>
    <property type="project" value="GO_Central"/>
</dbReference>
<dbReference type="GO" id="GO:0003697">
    <property type="term" value="F:single-stranded DNA binding"/>
    <property type="evidence" value="ECO:0000314"/>
    <property type="project" value="SGD"/>
</dbReference>
<dbReference type="GO" id="GO:0006260">
    <property type="term" value="P:DNA replication"/>
    <property type="evidence" value="ECO:0000318"/>
    <property type="project" value="GO_Central"/>
</dbReference>
<dbReference type="GO" id="GO:0006264">
    <property type="term" value="P:mitochondrial DNA replication"/>
    <property type="evidence" value="ECO:0000250"/>
    <property type="project" value="SGD"/>
</dbReference>
<dbReference type="GO" id="GO:0000002">
    <property type="term" value="P:mitochondrial genome maintenance"/>
    <property type="evidence" value="ECO:0000315"/>
    <property type="project" value="SGD"/>
</dbReference>
<dbReference type="GO" id="GO:0090297">
    <property type="term" value="P:positive regulation of mitochondrial DNA replication"/>
    <property type="evidence" value="ECO:0000314"/>
    <property type="project" value="SGD"/>
</dbReference>
<dbReference type="CDD" id="cd04496">
    <property type="entry name" value="SSB_OBF"/>
    <property type="match status" value="1"/>
</dbReference>
<dbReference type="FunFam" id="2.40.50.140:FF:000389">
    <property type="entry name" value="RIM1p ssDNA-binding protein"/>
    <property type="match status" value="1"/>
</dbReference>
<dbReference type="Gene3D" id="2.40.50.140">
    <property type="entry name" value="Nucleic acid-binding proteins"/>
    <property type="match status" value="1"/>
</dbReference>
<dbReference type="InterPro" id="IPR012340">
    <property type="entry name" value="NA-bd_OB-fold"/>
</dbReference>
<dbReference type="InterPro" id="IPR000424">
    <property type="entry name" value="Primosome_PriB/ssb"/>
</dbReference>
<dbReference type="InterPro" id="IPR011344">
    <property type="entry name" value="ssDNA-bd"/>
</dbReference>
<dbReference type="Pfam" id="PF00436">
    <property type="entry name" value="SSB"/>
    <property type="match status" value="1"/>
</dbReference>
<dbReference type="PIRSF" id="PIRSF002070">
    <property type="entry name" value="SSB"/>
    <property type="match status" value="1"/>
</dbReference>
<dbReference type="SUPFAM" id="SSF50249">
    <property type="entry name" value="Nucleic acid-binding proteins"/>
    <property type="match status" value="1"/>
</dbReference>
<dbReference type="PROSITE" id="PS50935">
    <property type="entry name" value="SSB"/>
    <property type="match status" value="1"/>
</dbReference>
<keyword id="KW-0002">3D-structure</keyword>
<keyword id="KW-0903">Direct protein sequencing</keyword>
<keyword id="KW-0235">DNA replication</keyword>
<keyword id="KW-0238">DNA-binding</keyword>
<keyword id="KW-0496">Mitochondrion</keyword>
<keyword id="KW-1185">Reference proteome</keyword>
<keyword id="KW-0809">Transit peptide</keyword>
<reference key="1">
    <citation type="journal article" date="1992" name="EMBO J.">
        <title>A single-stranded DNA binding protein required for mitochondrial DNA replication in S. cerevisiae is homologous to E. coli SSB.</title>
        <authorList>
            <person name="van Dyck E."/>
            <person name="Foury F."/>
            <person name="Stillman B."/>
            <person name="Brill S.J."/>
        </authorList>
    </citation>
    <scope>NUCLEOTIDE SEQUENCE [GENOMIC DNA / MRNA]</scope>
    <scope>PARTIAL PROTEIN SEQUENCE</scope>
</reference>
<reference key="2">
    <citation type="journal article" date="1992" name="Yeast">
        <title>Nucleotide sequence of 9.2 kb left of CRY1 on yeast chromosome III from strain AB972: evidence for a Ty insertion and functional analysis of open reading frame YCR28.</title>
        <authorList>
            <person name="Carbone M.L.A."/>
            <person name="Panzeri L."/>
            <person name="Falconi M.M."/>
            <person name="Carcano C."/>
            <person name="Plevani P."/>
            <person name="Lucchini G."/>
        </authorList>
    </citation>
    <scope>NUCLEOTIDE SEQUENCE [GENOMIC DNA]</scope>
    <source>
        <strain>ATCC 204511 / S288c / AB972</strain>
    </source>
</reference>
<reference key="3">
    <citation type="journal article" date="1992" name="Nature">
        <title>The complete DNA sequence of yeast chromosome III.</title>
        <authorList>
            <person name="Oliver S.G."/>
            <person name="van der Aart Q.J.M."/>
            <person name="Agostoni-Carbone M.L."/>
            <person name="Aigle M."/>
            <person name="Alberghina L."/>
            <person name="Alexandraki D."/>
            <person name="Antoine G."/>
            <person name="Anwar R."/>
            <person name="Ballesta J.P.G."/>
            <person name="Benit P."/>
            <person name="Berben G."/>
            <person name="Bergantino E."/>
            <person name="Biteau N."/>
            <person name="Bolle P.-A."/>
            <person name="Bolotin-Fukuhara M."/>
            <person name="Brown A."/>
            <person name="Brown A.J.P."/>
            <person name="Buhler J.-M."/>
            <person name="Carcano C."/>
            <person name="Carignani G."/>
            <person name="Cederberg H."/>
            <person name="Chanet R."/>
            <person name="Contreras R."/>
            <person name="Crouzet M."/>
            <person name="Daignan-Fornier B."/>
            <person name="Defoor E."/>
            <person name="Delgado M.D."/>
            <person name="Demolder J."/>
            <person name="Doira C."/>
            <person name="Dubois E."/>
            <person name="Dujon B."/>
            <person name="Duesterhoeft A."/>
            <person name="Erdmann D."/>
            <person name="Esteban M."/>
            <person name="Fabre F."/>
            <person name="Fairhead C."/>
            <person name="Faye G."/>
            <person name="Feldmann H."/>
            <person name="Fiers W."/>
            <person name="Francingues-Gaillard M.-C."/>
            <person name="Franco L."/>
            <person name="Frontali L."/>
            <person name="Fukuhara H."/>
            <person name="Fuller L.J."/>
            <person name="Galland P."/>
            <person name="Gent M.E."/>
            <person name="Gigot D."/>
            <person name="Gilliquet V."/>
            <person name="Glansdorff N."/>
            <person name="Goffeau A."/>
            <person name="Grenson M."/>
            <person name="Grisanti P."/>
            <person name="Grivell L.A."/>
            <person name="de Haan M."/>
            <person name="Haasemann M."/>
            <person name="Hatat D."/>
            <person name="Hoenicka J."/>
            <person name="Hegemann J.H."/>
            <person name="Herbert C.J."/>
            <person name="Hilger F."/>
            <person name="Hohmann S."/>
            <person name="Hollenberg C.P."/>
            <person name="Huse K."/>
            <person name="Iborra F."/>
            <person name="Indge K.J."/>
            <person name="Isono K."/>
            <person name="Jacq C."/>
            <person name="Jacquet M."/>
            <person name="James C.M."/>
            <person name="Jauniaux J.-C."/>
            <person name="Jia Y."/>
            <person name="Jimenez A."/>
            <person name="Kelly A."/>
            <person name="Kleinhans U."/>
            <person name="Kreisl P."/>
            <person name="Lanfranchi G."/>
            <person name="Lewis C."/>
            <person name="van der Linden C.G."/>
            <person name="Lucchini G."/>
            <person name="Lutzenkirchen K."/>
            <person name="Maat M.J."/>
            <person name="Mallet L."/>
            <person name="Mannhaupt G."/>
            <person name="Martegani E."/>
            <person name="Mathieu A."/>
            <person name="Maurer C.T.C."/>
            <person name="McConnell D."/>
            <person name="McKee R.A."/>
            <person name="Messenguy F."/>
            <person name="Mewes H.-W."/>
            <person name="Molemans F."/>
            <person name="Montague M.A."/>
            <person name="Muzi Falconi M."/>
            <person name="Navas L."/>
            <person name="Newlon C.S."/>
            <person name="Noone D."/>
            <person name="Pallier C."/>
            <person name="Panzeri L."/>
            <person name="Pearson B.M."/>
            <person name="Perea J."/>
            <person name="Philippsen P."/>
            <person name="Pierard A."/>
            <person name="Planta R.J."/>
            <person name="Plevani P."/>
            <person name="Poetsch B."/>
            <person name="Pohl F.M."/>
            <person name="Purnelle B."/>
            <person name="Ramezani Rad M."/>
            <person name="Rasmussen S.W."/>
            <person name="Raynal A."/>
            <person name="Remacha M.A."/>
            <person name="Richterich P."/>
            <person name="Roberts A.B."/>
            <person name="Rodriguez F."/>
            <person name="Sanz E."/>
            <person name="Schaaff-Gerstenschlaeger I."/>
            <person name="Scherens B."/>
            <person name="Schweitzer B."/>
            <person name="Shu Y."/>
            <person name="Skala J."/>
            <person name="Slonimski P.P."/>
            <person name="Sor F."/>
            <person name="Soustelle C."/>
            <person name="Spiegelberg R."/>
            <person name="Stateva L.I."/>
            <person name="Steensma H.Y."/>
            <person name="Steiner S."/>
            <person name="Thierry A."/>
            <person name="Thireos G."/>
            <person name="Tzermia M."/>
            <person name="Urrestarazu L.A."/>
            <person name="Valle G."/>
            <person name="Vetter I."/>
            <person name="van Vliet-Reedijk J.C."/>
            <person name="Voet M."/>
            <person name="Volckaert G."/>
            <person name="Vreken P."/>
            <person name="Wang H."/>
            <person name="Warmington J.R."/>
            <person name="von Wettstein D."/>
            <person name="Wicksteed B.L."/>
            <person name="Wilson C."/>
            <person name="Wurst H."/>
            <person name="Xu G."/>
            <person name="Yoshikawa A."/>
            <person name="Zimmermann F.K."/>
            <person name="Sgouros J.G."/>
        </authorList>
    </citation>
    <scope>NUCLEOTIDE SEQUENCE [LARGE SCALE GENOMIC DNA]</scope>
    <source>
        <strain>ATCC 204508 / S288c</strain>
    </source>
</reference>
<reference key="4">
    <citation type="journal article" date="2014" name="G3 (Bethesda)">
        <title>The reference genome sequence of Saccharomyces cerevisiae: Then and now.</title>
        <authorList>
            <person name="Engel S.R."/>
            <person name="Dietrich F.S."/>
            <person name="Fisk D.G."/>
            <person name="Binkley G."/>
            <person name="Balakrishnan R."/>
            <person name="Costanzo M.C."/>
            <person name="Dwight S.S."/>
            <person name="Hitz B.C."/>
            <person name="Karra K."/>
            <person name="Nash R.S."/>
            <person name="Weng S."/>
            <person name="Wong E.D."/>
            <person name="Lloyd P."/>
            <person name="Skrzypek M.S."/>
            <person name="Miyasato S.R."/>
            <person name="Simison M."/>
            <person name="Cherry J.M."/>
        </authorList>
    </citation>
    <scope>GENOME REANNOTATION</scope>
    <source>
        <strain>ATCC 204508 / S288c</strain>
    </source>
</reference>
<reference key="5">
    <citation type="journal article" date="2003" name="Nature">
        <title>Global analysis of protein expression in yeast.</title>
        <authorList>
            <person name="Ghaemmaghami S."/>
            <person name="Huh W.-K."/>
            <person name="Bower K."/>
            <person name="Howson R.W."/>
            <person name="Belle A."/>
            <person name="Dephoure N."/>
            <person name="O'Shea E.K."/>
            <person name="Weissman J.S."/>
        </authorList>
    </citation>
    <scope>LEVEL OF PROTEIN EXPRESSION [LARGE SCALE ANALYSIS]</scope>
</reference>
<reference key="6">
    <citation type="journal article" date="2013" name="Nucleic Acids Res.">
        <title>Physical and functional interaction between yeast Pif1 helicase and Rim1 single-stranded DNA binding protein.</title>
        <authorList>
            <person name="Ramanagoudr-Bhojappa R."/>
            <person name="Blair L.P."/>
            <person name="Tackett A.J."/>
            <person name="Raney K.D."/>
        </authorList>
    </citation>
    <scope>FUNCTION</scope>
    <scope>INTERACTION WITH PIF1</scope>
    <scope>SUBUNIT</scope>
</reference>
<organism>
    <name type="scientific">Saccharomyces cerevisiae (strain ATCC 204508 / S288c)</name>
    <name type="common">Baker's yeast</name>
    <dbReference type="NCBI Taxonomy" id="559292"/>
    <lineage>
        <taxon>Eukaryota</taxon>
        <taxon>Fungi</taxon>
        <taxon>Dikarya</taxon>
        <taxon>Ascomycota</taxon>
        <taxon>Saccharomycotina</taxon>
        <taxon>Saccharomycetes</taxon>
        <taxon>Saccharomycetales</taxon>
        <taxon>Saccharomycetaceae</taxon>
        <taxon>Saccharomyces</taxon>
    </lineage>
</organism>
<evidence type="ECO:0000255" key="1">
    <source>
        <dbReference type="PROSITE-ProRule" id="PRU00252"/>
    </source>
</evidence>
<evidence type="ECO:0000269" key="2">
    <source>
    </source>
</evidence>
<evidence type="ECO:0000269" key="3">
    <source>
    </source>
</evidence>
<evidence type="ECO:0007829" key="4">
    <source>
        <dbReference type="PDB" id="6CQK"/>
    </source>
</evidence>
<sequence>MFLRTQARFFHATTKKMDFSKMSIVGRIGSEFTEHTSANNNRYLKYSIASQPRRDGQTNWYNITVFNEPQINFLTEYVRKGALVYVEADAANYVFERDDGSKGTTLSLVQKDINLLKNGKKLEDAEGQENAASSE</sequence>
<accession>P32445</accession>
<accession>D6VR39</accession>
<accession>O11851</accession>
<comment type="function">
    <text evidence="3">This protein binds preferentially and cooperatively to single-stranded DNA (ssDNS). Involved in mitochondrial DNA replication. Stimulates PIF1 helicase activity.</text>
</comment>
<comment type="subunit">
    <text evidence="3">Homotetramer. Interacts with PIF1.</text>
</comment>
<comment type="subcellular location">
    <subcellularLocation>
        <location>Mitochondrion</location>
    </subcellularLocation>
</comment>
<comment type="miscellaneous">
    <text evidence="2">Present with 3060 molecules/cell in log phase SD medium.</text>
</comment>
<feature type="transit peptide" description="Mitochondrion">
    <location>
        <begin position="1"/>
        <end position="17"/>
    </location>
</feature>
<feature type="chain" id="PRO_0000033262" description="Single-stranded DNA-binding protein RIM1, mitochondrial">
    <location>
        <begin position="18"/>
        <end position="135"/>
    </location>
</feature>
<feature type="domain" description="SSB" evidence="1">
    <location>
        <begin position="19"/>
        <end position="117"/>
    </location>
</feature>
<feature type="strand" evidence="4">
    <location>
        <begin position="19"/>
        <end position="28"/>
    </location>
</feature>
<feature type="strand" evidence="4">
    <location>
        <begin position="33"/>
        <end position="36"/>
    </location>
</feature>
<feature type="strand" evidence="4">
    <location>
        <begin position="38"/>
        <end position="40"/>
    </location>
</feature>
<feature type="strand" evidence="4">
    <location>
        <begin position="42"/>
        <end position="50"/>
    </location>
</feature>
<feature type="strand" evidence="4">
    <location>
        <begin position="52"/>
        <end position="56"/>
    </location>
</feature>
<feature type="strand" evidence="4">
    <location>
        <begin position="59"/>
        <end position="65"/>
    </location>
</feature>
<feature type="helix" evidence="4">
    <location>
        <begin position="68"/>
        <end position="75"/>
    </location>
</feature>
<feature type="strand" evidence="4">
    <location>
        <begin position="83"/>
        <end position="93"/>
    </location>
</feature>
<feature type="strand" evidence="4">
    <location>
        <begin position="105"/>
        <end position="117"/>
    </location>
</feature>
<proteinExistence type="evidence at protein level"/>